<keyword id="KW-0414">Isoprene biosynthesis</keyword>
<keyword id="KW-0464">Manganese</keyword>
<keyword id="KW-0479">Metal-binding</keyword>
<keyword id="KW-0521">NADP</keyword>
<keyword id="KW-0560">Oxidoreductase</keyword>
<proteinExistence type="inferred from homology"/>
<comment type="function">
    <text evidence="1">Catalyzes the NADPH-dependent rearrangement and reduction of 1-deoxy-D-xylulose-5-phosphate (DXP) to 2-C-methyl-D-erythritol 4-phosphate (MEP).</text>
</comment>
<comment type="catalytic activity">
    <reaction evidence="1">
        <text>2-C-methyl-D-erythritol 4-phosphate + NADP(+) = 1-deoxy-D-xylulose 5-phosphate + NADPH + H(+)</text>
        <dbReference type="Rhea" id="RHEA:13717"/>
        <dbReference type="ChEBI" id="CHEBI:15378"/>
        <dbReference type="ChEBI" id="CHEBI:57783"/>
        <dbReference type="ChEBI" id="CHEBI:57792"/>
        <dbReference type="ChEBI" id="CHEBI:58262"/>
        <dbReference type="ChEBI" id="CHEBI:58349"/>
        <dbReference type="EC" id="1.1.1.267"/>
    </reaction>
    <physiologicalReaction direction="right-to-left" evidence="1">
        <dbReference type="Rhea" id="RHEA:13719"/>
    </physiologicalReaction>
</comment>
<comment type="cofactor">
    <cofactor evidence="1">
        <name>Mg(2+)</name>
        <dbReference type="ChEBI" id="CHEBI:18420"/>
    </cofactor>
    <cofactor evidence="1">
        <name>Mn(2+)</name>
        <dbReference type="ChEBI" id="CHEBI:29035"/>
    </cofactor>
</comment>
<comment type="pathway">
    <text evidence="1">Isoprenoid biosynthesis; isopentenyl diphosphate biosynthesis via DXP pathway; isopentenyl diphosphate from 1-deoxy-D-xylulose 5-phosphate: step 1/6.</text>
</comment>
<comment type="similarity">
    <text evidence="1">Belongs to the DXR family.</text>
</comment>
<organism>
    <name type="scientific">Burkholderia orbicola (strain AU 1054)</name>
    <dbReference type="NCBI Taxonomy" id="331271"/>
    <lineage>
        <taxon>Bacteria</taxon>
        <taxon>Pseudomonadati</taxon>
        <taxon>Pseudomonadota</taxon>
        <taxon>Betaproteobacteria</taxon>
        <taxon>Burkholderiales</taxon>
        <taxon>Burkholderiaceae</taxon>
        <taxon>Burkholderia</taxon>
        <taxon>Burkholderia cepacia complex</taxon>
        <taxon>Burkholderia orbicola</taxon>
    </lineage>
</organism>
<evidence type="ECO:0000255" key="1">
    <source>
        <dbReference type="HAMAP-Rule" id="MF_00183"/>
    </source>
</evidence>
<gene>
    <name evidence="1" type="primary">dxr</name>
    <name type="ordered locus">Bcen_6064</name>
</gene>
<name>DXR_BURO1</name>
<accession>Q1BHH6</accession>
<dbReference type="EC" id="1.1.1.267" evidence="1"/>
<dbReference type="EMBL" id="CP000380">
    <property type="protein sequence ID" value="ABF80929.1"/>
    <property type="molecule type" value="Genomic_DNA"/>
</dbReference>
<dbReference type="SMR" id="Q1BHH6"/>
<dbReference type="HOGENOM" id="CLU_035714_4_0_4"/>
<dbReference type="UniPathway" id="UPA00056">
    <property type="reaction ID" value="UER00092"/>
</dbReference>
<dbReference type="GO" id="GO:0030604">
    <property type="term" value="F:1-deoxy-D-xylulose-5-phosphate reductoisomerase activity"/>
    <property type="evidence" value="ECO:0007669"/>
    <property type="project" value="UniProtKB-UniRule"/>
</dbReference>
<dbReference type="GO" id="GO:0030145">
    <property type="term" value="F:manganese ion binding"/>
    <property type="evidence" value="ECO:0007669"/>
    <property type="project" value="TreeGrafter"/>
</dbReference>
<dbReference type="GO" id="GO:0070402">
    <property type="term" value="F:NADPH binding"/>
    <property type="evidence" value="ECO:0007669"/>
    <property type="project" value="InterPro"/>
</dbReference>
<dbReference type="GO" id="GO:0051484">
    <property type="term" value="P:isopentenyl diphosphate biosynthetic process, methylerythritol 4-phosphate pathway involved in terpenoid biosynthetic process"/>
    <property type="evidence" value="ECO:0007669"/>
    <property type="project" value="TreeGrafter"/>
</dbReference>
<dbReference type="FunFam" id="3.40.50.720:FF:000045">
    <property type="entry name" value="1-deoxy-D-xylulose 5-phosphate reductoisomerase"/>
    <property type="match status" value="1"/>
</dbReference>
<dbReference type="Gene3D" id="1.10.1740.10">
    <property type="match status" value="1"/>
</dbReference>
<dbReference type="Gene3D" id="3.40.50.720">
    <property type="entry name" value="NAD(P)-binding Rossmann-like Domain"/>
    <property type="match status" value="1"/>
</dbReference>
<dbReference type="HAMAP" id="MF_00183">
    <property type="entry name" value="DXP_reductoisom"/>
    <property type="match status" value="1"/>
</dbReference>
<dbReference type="InterPro" id="IPR003821">
    <property type="entry name" value="DXP_reductoisomerase"/>
</dbReference>
<dbReference type="InterPro" id="IPR013644">
    <property type="entry name" value="DXP_reductoisomerase_C"/>
</dbReference>
<dbReference type="InterPro" id="IPR013512">
    <property type="entry name" value="DXP_reductoisomerase_N"/>
</dbReference>
<dbReference type="InterPro" id="IPR026877">
    <property type="entry name" value="DXPR_C"/>
</dbReference>
<dbReference type="InterPro" id="IPR036169">
    <property type="entry name" value="DXPR_C_sf"/>
</dbReference>
<dbReference type="InterPro" id="IPR036291">
    <property type="entry name" value="NAD(P)-bd_dom_sf"/>
</dbReference>
<dbReference type="NCBIfam" id="TIGR00243">
    <property type="entry name" value="Dxr"/>
    <property type="match status" value="1"/>
</dbReference>
<dbReference type="NCBIfam" id="NF003938">
    <property type="entry name" value="PRK05447.1-1"/>
    <property type="match status" value="1"/>
</dbReference>
<dbReference type="NCBIfam" id="NF009114">
    <property type="entry name" value="PRK12464.1"/>
    <property type="match status" value="1"/>
</dbReference>
<dbReference type="PANTHER" id="PTHR30525">
    <property type="entry name" value="1-DEOXY-D-XYLULOSE 5-PHOSPHATE REDUCTOISOMERASE"/>
    <property type="match status" value="1"/>
</dbReference>
<dbReference type="PANTHER" id="PTHR30525:SF0">
    <property type="entry name" value="1-DEOXY-D-XYLULOSE 5-PHOSPHATE REDUCTOISOMERASE, CHLOROPLASTIC"/>
    <property type="match status" value="1"/>
</dbReference>
<dbReference type="Pfam" id="PF08436">
    <property type="entry name" value="DXP_redisom_C"/>
    <property type="match status" value="1"/>
</dbReference>
<dbReference type="Pfam" id="PF02670">
    <property type="entry name" value="DXP_reductoisom"/>
    <property type="match status" value="1"/>
</dbReference>
<dbReference type="Pfam" id="PF13288">
    <property type="entry name" value="DXPR_C"/>
    <property type="match status" value="1"/>
</dbReference>
<dbReference type="PIRSF" id="PIRSF006205">
    <property type="entry name" value="Dxp_reductismrs"/>
    <property type="match status" value="1"/>
</dbReference>
<dbReference type="SUPFAM" id="SSF69055">
    <property type="entry name" value="1-deoxy-D-xylulose-5-phosphate reductoisomerase, C-terminal domain"/>
    <property type="match status" value="1"/>
</dbReference>
<dbReference type="SUPFAM" id="SSF55347">
    <property type="entry name" value="Glyceraldehyde-3-phosphate dehydrogenase-like, C-terminal domain"/>
    <property type="match status" value="1"/>
</dbReference>
<dbReference type="SUPFAM" id="SSF51735">
    <property type="entry name" value="NAD(P)-binding Rossmann-fold domains"/>
    <property type="match status" value="1"/>
</dbReference>
<sequence>MQKRLTLLGSTGSIGDSTLDVVARHPERFSVYALTAHRNGDKLVEQCLRFAPEVAVVGDAATAAHVDAKLRAAGSKTVVLHGPQALVDVSKSDGCDTVVAAIVGAAGLAPSLAAARAGKRILLANKEALVMSGAIFMDAVRDHGAILLPVDSEHNAIFQCMPRDAAEHGGISKIILTASGGPFRTREPATLVDVTPDEACKHPNWVMGRKISVDSATMMNKGLEVIEAHWIFGLPGDRIDVLIHPQSVIHSLVSYRDGSVLAQLGNPDMRTPIAHALAFPERVDAGVDQLDLAQIAQLSFEKPDYARFPCLALALKALEEGGIASAALNAANEVAVEAFLERRIGFMAIAATVDAVLNTLPNRAPDGLDDVLAADAEARRLAAAIIAKAPAPRVERTV</sequence>
<reference key="1">
    <citation type="submission" date="2006-05" db="EMBL/GenBank/DDBJ databases">
        <title>Complete sequence of chromosome 3 of Burkholderia cenocepacia AU 1054.</title>
        <authorList>
            <consortium name="US DOE Joint Genome Institute"/>
            <person name="Copeland A."/>
            <person name="Lucas S."/>
            <person name="Lapidus A."/>
            <person name="Barry K."/>
            <person name="Detter J.C."/>
            <person name="Glavina del Rio T."/>
            <person name="Hammon N."/>
            <person name="Israni S."/>
            <person name="Dalin E."/>
            <person name="Tice H."/>
            <person name="Pitluck S."/>
            <person name="Chain P."/>
            <person name="Malfatti S."/>
            <person name="Shin M."/>
            <person name="Vergez L."/>
            <person name="Schmutz J."/>
            <person name="Larimer F."/>
            <person name="Land M."/>
            <person name="Hauser L."/>
            <person name="Kyrpides N."/>
            <person name="Lykidis A."/>
            <person name="LiPuma J.J."/>
            <person name="Konstantinidis K."/>
            <person name="Tiedje J.M."/>
            <person name="Richardson P."/>
        </authorList>
    </citation>
    <scope>NUCLEOTIDE SEQUENCE [LARGE SCALE GENOMIC DNA]</scope>
    <source>
        <strain>AU 1054</strain>
    </source>
</reference>
<protein>
    <recommendedName>
        <fullName evidence="1">1-deoxy-D-xylulose 5-phosphate reductoisomerase</fullName>
        <shortName evidence="1">DXP reductoisomerase</shortName>
        <ecNumber evidence="1">1.1.1.267</ecNumber>
    </recommendedName>
    <alternativeName>
        <fullName evidence="1">1-deoxyxylulose-5-phosphate reductoisomerase</fullName>
    </alternativeName>
    <alternativeName>
        <fullName evidence="1">2-C-methyl-D-erythritol 4-phosphate synthase</fullName>
    </alternativeName>
</protein>
<feature type="chain" id="PRO_1000020223" description="1-deoxy-D-xylulose 5-phosphate reductoisomerase">
    <location>
        <begin position="1"/>
        <end position="398"/>
    </location>
</feature>
<feature type="binding site" evidence="1">
    <location>
        <position position="11"/>
    </location>
    <ligand>
        <name>NADPH</name>
        <dbReference type="ChEBI" id="CHEBI:57783"/>
    </ligand>
</feature>
<feature type="binding site" evidence="1">
    <location>
        <position position="12"/>
    </location>
    <ligand>
        <name>NADPH</name>
        <dbReference type="ChEBI" id="CHEBI:57783"/>
    </ligand>
</feature>
<feature type="binding site" evidence="1">
    <location>
        <position position="13"/>
    </location>
    <ligand>
        <name>NADPH</name>
        <dbReference type="ChEBI" id="CHEBI:57783"/>
    </ligand>
</feature>
<feature type="binding site" evidence="1">
    <location>
        <position position="14"/>
    </location>
    <ligand>
        <name>NADPH</name>
        <dbReference type="ChEBI" id="CHEBI:57783"/>
    </ligand>
</feature>
<feature type="binding site" evidence="1">
    <location>
        <position position="38"/>
    </location>
    <ligand>
        <name>NADPH</name>
        <dbReference type="ChEBI" id="CHEBI:57783"/>
    </ligand>
</feature>
<feature type="binding site" evidence="1">
    <location>
        <position position="39"/>
    </location>
    <ligand>
        <name>NADPH</name>
        <dbReference type="ChEBI" id="CHEBI:57783"/>
    </ligand>
</feature>
<feature type="binding site" evidence="1">
    <location>
        <position position="125"/>
    </location>
    <ligand>
        <name>NADPH</name>
        <dbReference type="ChEBI" id="CHEBI:57783"/>
    </ligand>
</feature>
<feature type="binding site" evidence="1">
    <location>
        <position position="126"/>
    </location>
    <ligand>
        <name>1-deoxy-D-xylulose 5-phosphate</name>
        <dbReference type="ChEBI" id="CHEBI:57792"/>
    </ligand>
</feature>
<feature type="binding site" evidence="1">
    <location>
        <position position="127"/>
    </location>
    <ligand>
        <name>NADPH</name>
        <dbReference type="ChEBI" id="CHEBI:57783"/>
    </ligand>
</feature>
<feature type="binding site" evidence="1">
    <location>
        <position position="151"/>
    </location>
    <ligand>
        <name>Mn(2+)</name>
        <dbReference type="ChEBI" id="CHEBI:29035"/>
    </ligand>
</feature>
<feature type="binding site" evidence="1">
    <location>
        <position position="152"/>
    </location>
    <ligand>
        <name>1-deoxy-D-xylulose 5-phosphate</name>
        <dbReference type="ChEBI" id="CHEBI:57792"/>
    </ligand>
</feature>
<feature type="binding site" evidence="1">
    <location>
        <position position="153"/>
    </location>
    <ligand>
        <name>1-deoxy-D-xylulose 5-phosphate</name>
        <dbReference type="ChEBI" id="CHEBI:57792"/>
    </ligand>
</feature>
<feature type="binding site" evidence="1">
    <location>
        <position position="153"/>
    </location>
    <ligand>
        <name>Mn(2+)</name>
        <dbReference type="ChEBI" id="CHEBI:29035"/>
    </ligand>
</feature>
<feature type="binding site" evidence="1">
    <location>
        <position position="179"/>
    </location>
    <ligand>
        <name>1-deoxy-D-xylulose 5-phosphate</name>
        <dbReference type="ChEBI" id="CHEBI:57792"/>
    </ligand>
</feature>
<feature type="binding site" evidence="1">
    <location>
        <position position="202"/>
    </location>
    <ligand>
        <name>1-deoxy-D-xylulose 5-phosphate</name>
        <dbReference type="ChEBI" id="CHEBI:57792"/>
    </ligand>
</feature>
<feature type="binding site" evidence="1">
    <location>
        <position position="208"/>
    </location>
    <ligand>
        <name>NADPH</name>
        <dbReference type="ChEBI" id="CHEBI:57783"/>
    </ligand>
</feature>
<feature type="binding site" evidence="1">
    <location>
        <position position="215"/>
    </location>
    <ligand>
        <name>1-deoxy-D-xylulose 5-phosphate</name>
        <dbReference type="ChEBI" id="CHEBI:57792"/>
    </ligand>
</feature>
<feature type="binding site" evidence="1">
    <location>
        <position position="220"/>
    </location>
    <ligand>
        <name>1-deoxy-D-xylulose 5-phosphate</name>
        <dbReference type="ChEBI" id="CHEBI:57792"/>
    </ligand>
</feature>
<feature type="binding site" evidence="1">
    <location>
        <position position="221"/>
    </location>
    <ligand>
        <name>1-deoxy-D-xylulose 5-phosphate</name>
        <dbReference type="ChEBI" id="CHEBI:57792"/>
    </ligand>
</feature>
<feature type="binding site" evidence="1">
    <location>
        <position position="224"/>
    </location>
    <ligand>
        <name>1-deoxy-D-xylulose 5-phosphate</name>
        <dbReference type="ChEBI" id="CHEBI:57792"/>
    </ligand>
</feature>
<feature type="binding site" evidence="1">
    <location>
        <position position="224"/>
    </location>
    <ligand>
        <name>Mn(2+)</name>
        <dbReference type="ChEBI" id="CHEBI:29035"/>
    </ligand>
</feature>